<keyword id="KW-0072">Autophagy</keyword>
<keyword id="KW-0325">Glycoprotein</keyword>
<keyword id="KW-0458">Lysosome</keyword>
<keyword id="KW-0472">Membrane</keyword>
<keyword id="KW-1267">Proteomics identification</keyword>
<keyword id="KW-1185">Reference proteome</keyword>
<keyword id="KW-0812">Transmembrane</keyword>
<keyword id="KW-1133">Transmembrane helix</keyword>
<evidence type="ECO:0000250" key="1">
    <source>
        <dbReference type="UniProtKB" id="Q8BNQ3"/>
    </source>
</evidence>
<evidence type="ECO:0000255" key="2"/>
<evidence type="ECO:0000256" key="3">
    <source>
        <dbReference type="SAM" id="MobiDB-lite"/>
    </source>
</evidence>
<evidence type="ECO:0000269" key="4">
    <source>
    </source>
</evidence>
<evidence type="ECO:0000269" key="5">
    <source>
    </source>
</evidence>
<evidence type="ECO:0000269" key="6">
    <source>
    </source>
</evidence>
<evidence type="ECO:0000303" key="7">
    <source>
    </source>
</evidence>
<evidence type="ECO:0000305" key="8"/>
<gene>
    <name type="primary">GPR137B</name>
    <name evidence="7" type="synonym">TM7SF1</name>
</gene>
<name>G137B_HUMAN</name>
<protein>
    <recommendedName>
        <fullName>Integral membrane protein GPR137B</fullName>
    </recommendedName>
    <alternativeName>
        <fullName>Transmembrane 7 superfamily member 1 protein</fullName>
    </alternativeName>
</protein>
<organism>
    <name type="scientific">Homo sapiens</name>
    <name type="common">Human</name>
    <dbReference type="NCBI Taxonomy" id="9606"/>
    <lineage>
        <taxon>Eukaryota</taxon>
        <taxon>Metazoa</taxon>
        <taxon>Chordata</taxon>
        <taxon>Craniata</taxon>
        <taxon>Vertebrata</taxon>
        <taxon>Euteleostomi</taxon>
        <taxon>Mammalia</taxon>
        <taxon>Eutheria</taxon>
        <taxon>Euarchontoglires</taxon>
        <taxon>Primates</taxon>
        <taxon>Haplorrhini</taxon>
        <taxon>Catarrhini</taxon>
        <taxon>Hominidae</taxon>
        <taxon>Homo</taxon>
    </lineage>
</organism>
<accession>O60478</accession>
<accession>Q53EK7</accession>
<accession>Q5TAE6</accession>
<accession>Q6FHI3</accession>
<dbReference type="EMBL" id="AF027826">
    <property type="protein sequence ID" value="AAC39669.1"/>
    <property type="molecule type" value="mRNA"/>
</dbReference>
<dbReference type="EMBL" id="AY242135">
    <property type="protein sequence ID" value="AAO92302.1"/>
    <property type="molecule type" value="mRNA"/>
</dbReference>
<dbReference type="EMBL" id="CR541770">
    <property type="protein sequence ID" value="CAG46569.1"/>
    <property type="molecule type" value="mRNA"/>
</dbReference>
<dbReference type="EMBL" id="AK223632">
    <property type="protein sequence ID" value="BAD97352.1"/>
    <property type="molecule type" value="mRNA"/>
</dbReference>
<dbReference type="EMBL" id="AL122018">
    <property type="status" value="NOT_ANNOTATED_CDS"/>
    <property type="molecule type" value="Genomic_DNA"/>
</dbReference>
<dbReference type="EMBL" id="AL139162">
    <property type="status" value="NOT_ANNOTATED_CDS"/>
    <property type="molecule type" value="Genomic_DNA"/>
</dbReference>
<dbReference type="EMBL" id="CH471098">
    <property type="protein sequence ID" value="EAW70043.1"/>
    <property type="molecule type" value="Genomic_DNA"/>
</dbReference>
<dbReference type="EMBL" id="BC012100">
    <property type="protein sequence ID" value="AAH12100.1"/>
    <property type="molecule type" value="mRNA"/>
</dbReference>
<dbReference type="CCDS" id="CCDS1609.1"/>
<dbReference type="RefSeq" id="NP_003263.1">
    <property type="nucleotide sequence ID" value="NM_003272.4"/>
</dbReference>
<dbReference type="BioGRID" id="112962">
    <property type="interactions" value="9"/>
</dbReference>
<dbReference type="FunCoup" id="O60478">
    <property type="interactions" value="272"/>
</dbReference>
<dbReference type="IntAct" id="O60478">
    <property type="interactions" value="9"/>
</dbReference>
<dbReference type="STRING" id="9606.ENSP00000355551"/>
<dbReference type="TCDB" id="9.B.123.1.1">
    <property type="family name" value="the lysosomal 7-tms (tm7sf1) family"/>
</dbReference>
<dbReference type="GlyCosmos" id="O60478">
    <property type="glycosylation" value="3 sites, No reported glycans"/>
</dbReference>
<dbReference type="GlyGen" id="O60478">
    <property type="glycosylation" value="3 sites"/>
</dbReference>
<dbReference type="iPTMnet" id="O60478"/>
<dbReference type="PhosphoSitePlus" id="O60478"/>
<dbReference type="SwissPalm" id="O60478"/>
<dbReference type="BioMuta" id="GPR137B"/>
<dbReference type="MassIVE" id="O60478"/>
<dbReference type="PaxDb" id="9606-ENSP00000355551"/>
<dbReference type="PeptideAtlas" id="O60478"/>
<dbReference type="ProteomicsDB" id="49420"/>
<dbReference type="Antibodypedia" id="20812">
    <property type="antibodies" value="124 antibodies from 28 providers"/>
</dbReference>
<dbReference type="DNASU" id="7107"/>
<dbReference type="Ensembl" id="ENST00000366592.8">
    <property type="protein sequence ID" value="ENSP00000355551.3"/>
    <property type="gene ID" value="ENSG00000077585.14"/>
</dbReference>
<dbReference type="GeneID" id="7107"/>
<dbReference type="KEGG" id="hsa:7107"/>
<dbReference type="MANE-Select" id="ENST00000366592.8">
    <property type="protein sequence ID" value="ENSP00000355551.3"/>
    <property type="RefSeq nucleotide sequence ID" value="NM_003272.4"/>
    <property type="RefSeq protein sequence ID" value="NP_003263.1"/>
</dbReference>
<dbReference type="UCSC" id="uc001hxq.3">
    <property type="organism name" value="human"/>
</dbReference>
<dbReference type="AGR" id="HGNC:11862"/>
<dbReference type="CTD" id="7107"/>
<dbReference type="DisGeNET" id="7107"/>
<dbReference type="GeneCards" id="GPR137B"/>
<dbReference type="HGNC" id="HGNC:11862">
    <property type="gene designation" value="GPR137B"/>
</dbReference>
<dbReference type="HPA" id="ENSG00000077585">
    <property type="expression patterns" value="Tissue enhanced (retina)"/>
</dbReference>
<dbReference type="MIM" id="604658">
    <property type="type" value="gene"/>
</dbReference>
<dbReference type="neXtProt" id="NX_O60478"/>
<dbReference type="OpenTargets" id="ENSG00000077585"/>
<dbReference type="PharmGKB" id="PA36563"/>
<dbReference type="VEuPathDB" id="HostDB:ENSG00000077585"/>
<dbReference type="eggNOG" id="ENOG502QQ83">
    <property type="taxonomic scope" value="Eukaryota"/>
</dbReference>
<dbReference type="GeneTree" id="ENSGT00940000153986"/>
<dbReference type="HOGENOM" id="CLU_050057_0_0_1"/>
<dbReference type="InParanoid" id="O60478"/>
<dbReference type="OMA" id="DPQRYDS"/>
<dbReference type="OrthoDB" id="192544at2759"/>
<dbReference type="PAN-GO" id="O60478">
    <property type="GO annotations" value="5 GO annotations based on evolutionary models"/>
</dbReference>
<dbReference type="PhylomeDB" id="O60478"/>
<dbReference type="TreeFam" id="TF329003"/>
<dbReference type="PathwayCommons" id="O60478"/>
<dbReference type="SignaLink" id="O60478"/>
<dbReference type="BioGRID-ORCS" id="7107">
    <property type="hits" value="5 hits in 1136 CRISPR screens"/>
</dbReference>
<dbReference type="ChiTaRS" id="GPR137B">
    <property type="organism name" value="human"/>
</dbReference>
<dbReference type="GenomeRNAi" id="7107"/>
<dbReference type="Pharos" id="O60478">
    <property type="development level" value="Tbio"/>
</dbReference>
<dbReference type="PRO" id="PR:O60478"/>
<dbReference type="Proteomes" id="UP000005640">
    <property type="component" value="Chromosome 1"/>
</dbReference>
<dbReference type="RNAct" id="O60478">
    <property type="molecule type" value="protein"/>
</dbReference>
<dbReference type="Bgee" id="ENSG00000077585">
    <property type="expression patterns" value="Expressed in pigmented layer of retina and 199 other cell types or tissues"/>
</dbReference>
<dbReference type="ExpressionAtlas" id="O60478">
    <property type="expression patterns" value="baseline and differential"/>
</dbReference>
<dbReference type="GO" id="GO:0005765">
    <property type="term" value="C:lysosomal membrane"/>
    <property type="evidence" value="ECO:0000314"/>
    <property type="project" value="UniProtKB"/>
</dbReference>
<dbReference type="GO" id="GO:0016020">
    <property type="term" value="C:membrane"/>
    <property type="evidence" value="ECO:0000304"/>
    <property type="project" value="ProtInc"/>
</dbReference>
<dbReference type="GO" id="GO:0005886">
    <property type="term" value="C:plasma membrane"/>
    <property type="evidence" value="ECO:0000304"/>
    <property type="project" value="ProtInc"/>
</dbReference>
<dbReference type="GO" id="GO:0006914">
    <property type="term" value="P:autophagy"/>
    <property type="evidence" value="ECO:0007669"/>
    <property type="project" value="UniProtKB-KW"/>
</dbReference>
<dbReference type="GO" id="GO:0045779">
    <property type="term" value="P:negative regulation of bone resorption"/>
    <property type="evidence" value="ECO:0000250"/>
    <property type="project" value="UniProtKB"/>
</dbReference>
<dbReference type="GO" id="GO:0045671">
    <property type="term" value="P:negative regulation of osteoclast differentiation"/>
    <property type="evidence" value="ECO:0000250"/>
    <property type="project" value="UniProtKB"/>
</dbReference>
<dbReference type="GO" id="GO:0150032">
    <property type="term" value="P:positive regulation of protein localization to lysosome"/>
    <property type="evidence" value="ECO:0000315"/>
    <property type="project" value="UniProtKB"/>
</dbReference>
<dbReference type="GO" id="GO:1904263">
    <property type="term" value="P:positive regulation of TORC1 signaling"/>
    <property type="evidence" value="ECO:0000315"/>
    <property type="project" value="UniProtKB"/>
</dbReference>
<dbReference type="GO" id="GO:0010506">
    <property type="term" value="P:regulation of autophagy"/>
    <property type="evidence" value="ECO:0000315"/>
    <property type="project" value="UniProtKB"/>
</dbReference>
<dbReference type="GO" id="GO:0043087">
    <property type="term" value="P:regulation of GTPase activity"/>
    <property type="evidence" value="ECO:0000315"/>
    <property type="project" value="UniProtKB"/>
</dbReference>
<dbReference type="GO" id="GO:0043030">
    <property type="term" value="P:regulation of macrophage activation"/>
    <property type="evidence" value="ECO:0000250"/>
    <property type="project" value="UniProtKB"/>
</dbReference>
<dbReference type="CDD" id="cd21476">
    <property type="entry name" value="7tm_GPR137B"/>
    <property type="match status" value="1"/>
</dbReference>
<dbReference type="InterPro" id="IPR029723">
    <property type="entry name" value="GPR137"/>
</dbReference>
<dbReference type="PANTHER" id="PTHR15146">
    <property type="entry name" value="INTEGRAL MEMBRANE PROTEIN GPR137"/>
    <property type="match status" value="1"/>
</dbReference>
<dbReference type="PANTHER" id="PTHR15146:SF0">
    <property type="entry name" value="INTEGRAL MEMBRANE PROTEIN GPR137B"/>
    <property type="match status" value="1"/>
</dbReference>
<feature type="chain" id="PRO_0000072583" description="Integral membrane protein GPR137B">
    <location>
        <begin position="1"/>
        <end position="399"/>
    </location>
</feature>
<feature type="topological domain" description="Lumenal" evidence="8">
    <location>
        <begin position="1"/>
        <end position="46"/>
    </location>
</feature>
<feature type="transmembrane region" description="Helical; Name=1" evidence="2">
    <location>
        <begin position="47"/>
        <end position="67"/>
    </location>
</feature>
<feature type="topological domain" description="Cytoplasmic" evidence="8">
    <location>
        <begin position="68"/>
        <end position="79"/>
    </location>
</feature>
<feature type="transmembrane region" description="Helical; Name=2" evidence="2">
    <location>
        <begin position="80"/>
        <end position="100"/>
    </location>
</feature>
<feature type="topological domain" description="Lumenal" evidence="8">
    <location>
        <begin position="101"/>
        <end position="111"/>
    </location>
</feature>
<feature type="transmembrane region" description="Helical; Name=3" evidence="2">
    <location>
        <begin position="112"/>
        <end position="132"/>
    </location>
</feature>
<feature type="topological domain" description="Cytoplasmic" evidence="8">
    <location>
        <begin position="133"/>
        <end position="159"/>
    </location>
</feature>
<feature type="transmembrane region" description="Helical; Name=4" evidence="2">
    <location>
        <begin position="160"/>
        <end position="180"/>
    </location>
</feature>
<feature type="topological domain" description="Lumenal" evidence="8">
    <location>
        <begin position="181"/>
        <end position="188"/>
    </location>
</feature>
<feature type="transmembrane region" description="Helical; Name=5" evidence="2">
    <location>
        <begin position="189"/>
        <end position="209"/>
    </location>
</feature>
<feature type="topological domain" description="Cytoplasmic" evidence="8">
    <location>
        <begin position="210"/>
        <end position="237"/>
    </location>
</feature>
<feature type="transmembrane region" description="Helical; Name=6" evidence="2">
    <location>
        <begin position="238"/>
        <end position="258"/>
    </location>
</feature>
<feature type="topological domain" description="Lumenal" evidence="8">
    <location>
        <begin position="259"/>
        <end position="292"/>
    </location>
</feature>
<feature type="transmembrane region" description="Helical; Name=7" evidence="2">
    <location>
        <begin position="293"/>
        <end position="313"/>
    </location>
</feature>
<feature type="topological domain" description="Cytoplasmic" evidence="8">
    <location>
        <begin position="314"/>
        <end position="399"/>
    </location>
</feature>
<feature type="region of interest" description="Disordered" evidence="3">
    <location>
        <begin position="1"/>
        <end position="22"/>
    </location>
</feature>
<feature type="glycosylation site" description="N-linked (GlcNAc...) asparagine" evidence="2">
    <location>
        <position position="26"/>
    </location>
</feature>
<feature type="glycosylation site" description="N-linked (GlcNAc...) asparagine" evidence="2">
    <location>
        <position position="263"/>
    </location>
</feature>
<feature type="glycosylation site" description="N-linked (GlcNAc...) asparagine" evidence="2">
    <location>
        <position position="275"/>
    </location>
</feature>
<feature type="sequence conflict" description="In Ref. 3; CAG46569." evidence="8" ref="3">
    <original>R</original>
    <variation>G</variation>
    <location>
        <position position="7"/>
    </location>
</feature>
<feature type="sequence conflict" description="In Ref. 3; CAG46569." evidence="8" ref="3">
    <original>A</original>
    <variation>S</variation>
    <location>
        <position position="54"/>
    </location>
</feature>
<feature type="sequence conflict" description="In Ref. 4; BAD97352." evidence="8" ref="4">
    <original>V</original>
    <variation>M</variation>
    <location>
        <position position="178"/>
    </location>
</feature>
<proteinExistence type="evidence at protein level"/>
<reference key="1">
    <citation type="journal article" date="1998" name="Genomics">
        <title>Cloning and characterization of a novel gene (TM7SF1) encoding a putative seven-pass transmembrane protein that is upregulated during kidney development.</title>
        <authorList>
            <person name="Spangenberg C."/>
            <person name="Winterpacht A."/>
            <person name="Zabel B.U."/>
            <person name="Lobbert R.W."/>
        </authorList>
    </citation>
    <scope>NUCLEOTIDE SEQUENCE [MRNA]</scope>
    <scope>TISSUE SPECIFICITY</scope>
</reference>
<reference key="2">
    <citation type="submission" date="2003-02" db="EMBL/GenBank/DDBJ databases">
        <title>cDNA clones of human proteins involved in signal transduction sequenced by the Guthrie cDNA resource center (www.cdna.org).</title>
        <authorList>
            <person name="Warren C.N."/>
            <person name="Aronstam R.S."/>
            <person name="Sharma S.V."/>
        </authorList>
    </citation>
    <scope>NUCLEOTIDE SEQUENCE [LARGE SCALE MRNA]</scope>
    <source>
        <tissue>Kidney</tissue>
    </source>
</reference>
<reference key="3">
    <citation type="submission" date="2004-06" db="EMBL/GenBank/DDBJ databases">
        <title>Cloning of human full open reading frames in Gateway(TM) system entry vector (pDONR201).</title>
        <authorList>
            <person name="Halleck A."/>
            <person name="Ebert L."/>
            <person name="Mkoundinya M."/>
            <person name="Schick M."/>
            <person name="Eisenstein S."/>
            <person name="Neubert P."/>
            <person name="Kstrang K."/>
            <person name="Schatten R."/>
            <person name="Shen B."/>
            <person name="Henze S."/>
            <person name="Mar W."/>
            <person name="Korn B."/>
            <person name="Zuo D."/>
            <person name="Hu Y."/>
            <person name="LaBaer J."/>
        </authorList>
    </citation>
    <scope>NUCLEOTIDE SEQUENCE [LARGE SCALE MRNA]</scope>
</reference>
<reference key="4">
    <citation type="submission" date="2005-04" db="EMBL/GenBank/DDBJ databases">
        <authorList>
            <person name="Totoki Y."/>
            <person name="Toyoda A."/>
            <person name="Takeda T."/>
            <person name="Sakaki Y."/>
            <person name="Tanaka A."/>
            <person name="Yokoyama S."/>
        </authorList>
    </citation>
    <scope>NUCLEOTIDE SEQUENCE [LARGE SCALE MRNA]</scope>
    <source>
        <tissue>Spleen</tissue>
    </source>
</reference>
<reference key="5">
    <citation type="journal article" date="2006" name="Nature">
        <title>The DNA sequence and biological annotation of human chromosome 1.</title>
        <authorList>
            <person name="Gregory S.G."/>
            <person name="Barlow K.F."/>
            <person name="McLay K.E."/>
            <person name="Kaul R."/>
            <person name="Swarbreck D."/>
            <person name="Dunham A."/>
            <person name="Scott C.E."/>
            <person name="Howe K.L."/>
            <person name="Woodfine K."/>
            <person name="Spencer C.C.A."/>
            <person name="Jones M.C."/>
            <person name="Gillson C."/>
            <person name="Searle S."/>
            <person name="Zhou Y."/>
            <person name="Kokocinski F."/>
            <person name="McDonald L."/>
            <person name="Evans R."/>
            <person name="Phillips K."/>
            <person name="Atkinson A."/>
            <person name="Cooper R."/>
            <person name="Jones C."/>
            <person name="Hall R.E."/>
            <person name="Andrews T.D."/>
            <person name="Lloyd C."/>
            <person name="Ainscough R."/>
            <person name="Almeida J.P."/>
            <person name="Ambrose K.D."/>
            <person name="Anderson F."/>
            <person name="Andrew R.W."/>
            <person name="Ashwell R.I.S."/>
            <person name="Aubin K."/>
            <person name="Babbage A.K."/>
            <person name="Bagguley C.L."/>
            <person name="Bailey J."/>
            <person name="Beasley H."/>
            <person name="Bethel G."/>
            <person name="Bird C.P."/>
            <person name="Bray-Allen S."/>
            <person name="Brown J.Y."/>
            <person name="Brown A.J."/>
            <person name="Buckley D."/>
            <person name="Burton J."/>
            <person name="Bye J."/>
            <person name="Carder C."/>
            <person name="Chapman J.C."/>
            <person name="Clark S.Y."/>
            <person name="Clarke G."/>
            <person name="Clee C."/>
            <person name="Cobley V."/>
            <person name="Collier R.E."/>
            <person name="Corby N."/>
            <person name="Coville G.J."/>
            <person name="Davies J."/>
            <person name="Deadman R."/>
            <person name="Dunn M."/>
            <person name="Earthrowl M."/>
            <person name="Ellington A.G."/>
            <person name="Errington H."/>
            <person name="Frankish A."/>
            <person name="Frankland J."/>
            <person name="French L."/>
            <person name="Garner P."/>
            <person name="Garnett J."/>
            <person name="Gay L."/>
            <person name="Ghori M.R.J."/>
            <person name="Gibson R."/>
            <person name="Gilby L.M."/>
            <person name="Gillett W."/>
            <person name="Glithero R.J."/>
            <person name="Grafham D.V."/>
            <person name="Griffiths C."/>
            <person name="Griffiths-Jones S."/>
            <person name="Grocock R."/>
            <person name="Hammond S."/>
            <person name="Harrison E.S.I."/>
            <person name="Hart E."/>
            <person name="Haugen E."/>
            <person name="Heath P.D."/>
            <person name="Holmes S."/>
            <person name="Holt K."/>
            <person name="Howden P.J."/>
            <person name="Hunt A.R."/>
            <person name="Hunt S.E."/>
            <person name="Hunter G."/>
            <person name="Isherwood J."/>
            <person name="James R."/>
            <person name="Johnson C."/>
            <person name="Johnson D."/>
            <person name="Joy A."/>
            <person name="Kay M."/>
            <person name="Kershaw J.K."/>
            <person name="Kibukawa M."/>
            <person name="Kimberley A.M."/>
            <person name="King A."/>
            <person name="Knights A.J."/>
            <person name="Lad H."/>
            <person name="Laird G."/>
            <person name="Lawlor S."/>
            <person name="Leongamornlert D.A."/>
            <person name="Lloyd D.M."/>
            <person name="Loveland J."/>
            <person name="Lovell J."/>
            <person name="Lush M.J."/>
            <person name="Lyne R."/>
            <person name="Martin S."/>
            <person name="Mashreghi-Mohammadi M."/>
            <person name="Matthews L."/>
            <person name="Matthews N.S.W."/>
            <person name="McLaren S."/>
            <person name="Milne S."/>
            <person name="Mistry S."/>
            <person name="Moore M.J.F."/>
            <person name="Nickerson T."/>
            <person name="O'Dell C.N."/>
            <person name="Oliver K."/>
            <person name="Palmeiri A."/>
            <person name="Palmer S.A."/>
            <person name="Parker A."/>
            <person name="Patel D."/>
            <person name="Pearce A.V."/>
            <person name="Peck A.I."/>
            <person name="Pelan S."/>
            <person name="Phelps K."/>
            <person name="Phillimore B.J."/>
            <person name="Plumb R."/>
            <person name="Rajan J."/>
            <person name="Raymond C."/>
            <person name="Rouse G."/>
            <person name="Saenphimmachak C."/>
            <person name="Sehra H.K."/>
            <person name="Sheridan E."/>
            <person name="Shownkeen R."/>
            <person name="Sims S."/>
            <person name="Skuce C.D."/>
            <person name="Smith M."/>
            <person name="Steward C."/>
            <person name="Subramanian S."/>
            <person name="Sycamore N."/>
            <person name="Tracey A."/>
            <person name="Tromans A."/>
            <person name="Van Helmond Z."/>
            <person name="Wall M."/>
            <person name="Wallis J.M."/>
            <person name="White S."/>
            <person name="Whitehead S.L."/>
            <person name="Wilkinson J.E."/>
            <person name="Willey D.L."/>
            <person name="Williams H."/>
            <person name="Wilming L."/>
            <person name="Wray P.W."/>
            <person name="Wu Z."/>
            <person name="Coulson A."/>
            <person name="Vaudin M."/>
            <person name="Sulston J.E."/>
            <person name="Durbin R.M."/>
            <person name="Hubbard T."/>
            <person name="Wooster R."/>
            <person name="Dunham I."/>
            <person name="Carter N.P."/>
            <person name="McVean G."/>
            <person name="Ross M.T."/>
            <person name="Harrow J."/>
            <person name="Olson M.V."/>
            <person name="Beck S."/>
            <person name="Rogers J."/>
            <person name="Bentley D.R."/>
        </authorList>
    </citation>
    <scope>NUCLEOTIDE SEQUENCE [LARGE SCALE GENOMIC DNA]</scope>
</reference>
<reference key="6">
    <citation type="submission" date="2005-07" db="EMBL/GenBank/DDBJ databases">
        <authorList>
            <person name="Mural R.J."/>
            <person name="Istrail S."/>
            <person name="Sutton G.G."/>
            <person name="Florea L."/>
            <person name="Halpern A.L."/>
            <person name="Mobarry C.M."/>
            <person name="Lippert R."/>
            <person name="Walenz B."/>
            <person name="Shatkay H."/>
            <person name="Dew I."/>
            <person name="Miller J.R."/>
            <person name="Flanigan M.J."/>
            <person name="Edwards N.J."/>
            <person name="Bolanos R."/>
            <person name="Fasulo D."/>
            <person name="Halldorsson B.V."/>
            <person name="Hannenhalli S."/>
            <person name="Turner R."/>
            <person name="Yooseph S."/>
            <person name="Lu F."/>
            <person name="Nusskern D.R."/>
            <person name="Shue B.C."/>
            <person name="Zheng X.H."/>
            <person name="Zhong F."/>
            <person name="Delcher A.L."/>
            <person name="Huson D.H."/>
            <person name="Kravitz S.A."/>
            <person name="Mouchard L."/>
            <person name="Reinert K."/>
            <person name="Remington K.A."/>
            <person name="Clark A.G."/>
            <person name="Waterman M.S."/>
            <person name="Eichler E.E."/>
            <person name="Adams M.D."/>
            <person name="Hunkapiller M.W."/>
            <person name="Myers E.W."/>
            <person name="Venter J.C."/>
        </authorList>
    </citation>
    <scope>NUCLEOTIDE SEQUENCE [LARGE SCALE GENOMIC DNA]</scope>
</reference>
<reference key="7">
    <citation type="journal article" date="2004" name="Genome Res.">
        <title>The status, quality, and expansion of the NIH full-length cDNA project: the Mammalian Gene Collection (MGC).</title>
        <authorList>
            <consortium name="The MGC Project Team"/>
        </authorList>
    </citation>
    <scope>NUCLEOTIDE SEQUENCE [LARGE SCALE MRNA]</scope>
    <source>
        <tissue>Skin</tissue>
    </source>
</reference>
<reference key="8">
    <citation type="journal article" date="2012" name="Mol. Biol. Rep.">
        <title>TM7SF1 (GPR137B): a novel lysosome integral membrane protein.</title>
        <authorList>
            <person name="Gao J."/>
            <person name="Xia L."/>
            <person name="Lu M."/>
            <person name="Zhang B."/>
            <person name="Chen Y."/>
            <person name="Xu R."/>
            <person name="Wang L."/>
        </authorList>
    </citation>
    <scope>SUBCELLULAR LOCATION</scope>
</reference>
<reference key="9">
    <citation type="journal article" date="2019" name="Nat. Cell Biol.">
        <title>The lysosomal GPCR-like protein GPR137B regulates Rag and mTORC1 localization and activity.</title>
        <authorList>
            <person name="Gan L."/>
            <person name="Seki A."/>
            <person name="Shen K."/>
            <person name="Iyer H."/>
            <person name="Han K."/>
            <person name="Hayer A."/>
            <person name="Wollman R."/>
            <person name="Ge X."/>
            <person name="Lin J.R."/>
            <person name="Dey G."/>
            <person name="Talbot W.S."/>
            <person name="Meyer T."/>
        </authorList>
    </citation>
    <scope>SUBCELLULAR LOCATION</scope>
    <scope>INTERACTION WITH RRAGA AND MTOR</scope>
    <scope>FUNCTION</scope>
</reference>
<comment type="function">
    <text evidence="5">Lysosomal integral membrane protein that regulates the localization and activity of mTORC1, a signaling complex promoting cell growth in response to growth factors, energy levels, and amino acids (PubMed:31036939). Interacts with Rag GTPases and increases the lysosomial localization and activity of Rag GTPases and thereby regulates mTORC1 translocation and activity in lysosome (PubMed:31036939). Involved in the regulation of lysosomal morphology and autophagy (PubMed:31036939).</text>
</comment>
<comment type="function">
    <text evidence="1">Also acts as a negative regulator of osteoclast activity (By similarity). Involved in interleukin-4-induced M2 macrophage polarization (By similarity).</text>
</comment>
<comment type="subunit">
    <text evidence="5">Interaction with RRAGA; increases RRAGA recruitment to lysosomes (PubMed:31036939). Interacts with MTOR; this interaction is amino acid sensitive (PubMed:31036939).</text>
</comment>
<comment type="interaction">
    <interactant intactId="EBI-18945347">
        <id>O60478</id>
    </interactant>
    <interactant intactId="EBI-742790">
        <id>Q13049</id>
        <label>TRIM32</label>
    </interactant>
    <organismsDiffer>false</organismsDiffer>
    <experiments>3</experiments>
</comment>
<comment type="subcellular location">
    <subcellularLocation>
        <location evidence="4 5">Lysosome membrane</location>
        <topology evidence="4">Multi-pass membrane protein</topology>
    </subcellularLocation>
    <text evidence="5">Colocalized with MTOR in lysosome after amino acid stimulation.</text>
</comment>
<comment type="tissue specificity">
    <text evidence="6">Expressed in kidney, heart, brain and placenta.</text>
</comment>
<comment type="similarity">
    <text evidence="8">Belongs to the GPR137 family.</text>
</comment>
<sequence length="399" mass="45599">MRPERPRPRGSAPGPMETPPWDPARNDSLPPTLTPAVPPYVKLGLTVVYTVFYALLFVFIYVQLWLVLRYRHKRLSYQSVFLFLCLFWASLRTVLFSFYFKDFVAANSLSPFVFWLLYCFPVCLQFFTLTLMNLYFTQVIFKAKSKYSPELLKYRLPLYLASLFISLVFLLVNLTCAVLVKTGNWERKVIVSVRVAINDTLFVLCAVSLSICLYKISKMSLANIYLESKGSSVCQVTAIGVTVILLYTSRACYNLFILSFSQNKSVHSFDYDWYNVSDQADLKNQLGDAGYVLFGVVLFVWELLPTTLVVYFFRVRNPTKDLTNPGMVPSHGFSPRSYFFDNPRRYDSDDDLAWNIAPQGLQGGFAPDYYDWGQQTNSFLAQAGTLQDSTLDPDKPSLG</sequence>